<evidence type="ECO:0000255" key="1">
    <source>
        <dbReference type="HAMAP-Rule" id="MF_00079"/>
    </source>
</evidence>
<comment type="function">
    <text evidence="1">Catalyzes the condensation of ATP and 5-phosphoribose 1-diphosphate to form N'-(5'-phosphoribosyl)-ATP (PR-ATP). Has a crucial role in the pathway because the rate of histidine biosynthesis seems to be controlled primarily by regulation of HisG enzymatic activity.</text>
</comment>
<comment type="catalytic activity">
    <reaction evidence="1">
        <text>1-(5-phospho-beta-D-ribosyl)-ATP + diphosphate = 5-phospho-alpha-D-ribose 1-diphosphate + ATP</text>
        <dbReference type="Rhea" id="RHEA:18473"/>
        <dbReference type="ChEBI" id="CHEBI:30616"/>
        <dbReference type="ChEBI" id="CHEBI:33019"/>
        <dbReference type="ChEBI" id="CHEBI:58017"/>
        <dbReference type="ChEBI" id="CHEBI:73183"/>
        <dbReference type="EC" id="2.4.2.17"/>
    </reaction>
</comment>
<comment type="cofactor">
    <cofactor evidence="1">
        <name>Mg(2+)</name>
        <dbReference type="ChEBI" id="CHEBI:18420"/>
    </cofactor>
</comment>
<comment type="activity regulation">
    <text evidence="1">Feedback inhibited by histidine.</text>
</comment>
<comment type="pathway">
    <text evidence="1">Amino-acid biosynthesis; L-histidine biosynthesis; L-histidine from 5-phospho-alpha-D-ribose 1-diphosphate: step 1/9.</text>
</comment>
<comment type="subcellular location">
    <subcellularLocation>
        <location evidence="1">Cytoplasm</location>
    </subcellularLocation>
</comment>
<comment type="similarity">
    <text evidence="1">Belongs to the ATP phosphoribosyltransferase family. Long subfamily.</text>
</comment>
<reference key="1">
    <citation type="submission" date="2007-02" db="EMBL/GenBank/DDBJ databases">
        <title>Complete sequence of Pyrobaculum calidifontis JCM 11548.</title>
        <authorList>
            <consortium name="US DOE Joint Genome Institute"/>
            <person name="Copeland A."/>
            <person name="Lucas S."/>
            <person name="Lapidus A."/>
            <person name="Barry K."/>
            <person name="Glavina del Rio T."/>
            <person name="Dalin E."/>
            <person name="Tice H."/>
            <person name="Pitluck S."/>
            <person name="Chain P."/>
            <person name="Malfatti S."/>
            <person name="Shin M."/>
            <person name="Vergez L."/>
            <person name="Schmutz J."/>
            <person name="Larimer F."/>
            <person name="Land M."/>
            <person name="Hauser L."/>
            <person name="Kyrpides N."/>
            <person name="Mikhailova N."/>
            <person name="Cozen A.E."/>
            <person name="Fitz-Gibbon S.T."/>
            <person name="House C.H."/>
            <person name="Saltikov C."/>
            <person name="Lowe T.M."/>
            <person name="Richardson P."/>
        </authorList>
    </citation>
    <scope>NUCLEOTIDE SEQUENCE [LARGE SCALE GENOMIC DNA]</scope>
    <source>
        <strain>DSM 21063 / JCM 11548 / VA1</strain>
    </source>
</reference>
<protein>
    <recommendedName>
        <fullName evidence="1">ATP phosphoribosyltransferase</fullName>
        <shortName evidence="1">ATP-PRT</shortName>
        <shortName evidence="1">ATP-PRTase</shortName>
        <ecNumber evidence="1">2.4.2.17</ecNumber>
    </recommendedName>
</protein>
<feature type="chain" id="PRO_1000004488" description="ATP phosphoribosyltransferase">
    <location>
        <begin position="1"/>
        <end position="282"/>
    </location>
</feature>
<gene>
    <name evidence="1" type="primary">hisG</name>
    <name type="ordered locus">Pcal_0134</name>
</gene>
<sequence>MLLAIPSKGRLLDPTLKLLEAIGMRLLASDERALVVPTSWRDVNVIRARPEDIPYIVESGKVWAGVTGHDYVVESGASVVEALELGFGRGRLVVAVPKSSGIKTVDELPPGTRVATKFVNIAYNYFAELGKRVRVVRVTGSVEILPQLGIADAILDVMATGTTLEVHGLVPIATVLETSARLIVHPSYVNHELTKKLTTFIQGYYAAQGKKMIFLNVPASRLEKVLAVLPAMEAPSVTPLAKGDVYEVFSVVPEDELPDIVIRLKEAGAKDIVVTPIEKLIS</sequence>
<dbReference type="EC" id="2.4.2.17" evidence="1"/>
<dbReference type="EMBL" id="CP000561">
    <property type="protein sequence ID" value="ABO07572.1"/>
    <property type="molecule type" value="Genomic_DNA"/>
</dbReference>
<dbReference type="RefSeq" id="WP_011848829.1">
    <property type="nucleotide sequence ID" value="NC_009073.1"/>
</dbReference>
<dbReference type="SMR" id="A3MSF5"/>
<dbReference type="STRING" id="410359.Pcal_0134"/>
<dbReference type="GeneID" id="4908524"/>
<dbReference type="KEGG" id="pcl:Pcal_0134"/>
<dbReference type="eggNOG" id="arCOG02208">
    <property type="taxonomic scope" value="Archaea"/>
</dbReference>
<dbReference type="HOGENOM" id="CLU_038115_1_1_2"/>
<dbReference type="OrthoDB" id="33116at2157"/>
<dbReference type="UniPathway" id="UPA00031">
    <property type="reaction ID" value="UER00006"/>
</dbReference>
<dbReference type="Proteomes" id="UP000001431">
    <property type="component" value="Chromosome"/>
</dbReference>
<dbReference type="GO" id="GO:0005737">
    <property type="term" value="C:cytoplasm"/>
    <property type="evidence" value="ECO:0007669"/>
    <property type="project" value="UniProtKB-SubCell"/>
</dbReference>
<dbReference type="GO" id="GO:0005524">
    <property type="term" value="F:ATP binding"/>
    <property type="evidence" value="ECO:0007669"/>
    <property type="project" value="UniProtKB-KW"/>
</dbReference>
<dbReference type="GO" id="GO:0003879">
    <property type="term" value="F:ATP phosphoribosyltransferase activity"/>
    <property type="evidence" value="ECO:0007669"/>
    <property type="project" value="UniProtKB-UniRule"/>
</dbReference>
<dbReference type="GO" id="GO:0000287">
    <property type="term" value="F:magnesium ion binding"/>
    <property type="evidence" value="ECO:0007669"/>
    <property type="project" value="UniProtKB-UniRule"/>
</dbReference>
<dbReference type="GO" id="GO:0000105">
    <property type="term" value="P:L-histidine biosynthetic process"/>
    <property type="evidence" value="ECO:0007669"/>
    <property type="project" value="UniProtKB-UniRule"/>
</dbReference>
<dbReference type="FunFam" id="3.30.70.120:FF:000002">
    <property type="entry name" value="ATP phosphoribosyltransferase"/>
    <property type="match status" value="1"/>
</dbReference>
<dbReference type="Gene3D" id="3.30.70.120">
    <property type="match status" value="1"/>
</dbReference>
<dbReference type="Gene3D" id="3.40.190.10">
    <property type="entry name" value="Periplasmic binding protein-like II"/>
    <property type="match status" value="2"/>
</dbReference>
<dbReference type="HAMAP" id="MF_00079">
    <property type="entry name" value="HisG_Long"/>
    <property type="match status" value="1"/>
</dbReference>
<dbReference type="InterPro" id="IPR020621">
    <property type="entry name" value="ATP-PRT_HisG_long"/>
</dbReference>
<dbReference type="InterPro" id="IPR013820">
    <property type="entry name" value="ATP_PRibTrfase_cat"/>
</dbReference>
<dbReference type="InterPro" id="IPR018198">
    <property type="entry name" value="ATP_PRibTrfase_CS"/>
</dbReference>
<dbReference type="InterPro" id="IPR001348">
    <property type="entry name" value="ATP_PRibTrfase_HisG"/>
</dbReference>
<dbReference type="InterPro" id="IPR013115">
    <property type="entry name" value="HisG_C"/>
</dbReference>
<dbReference type="InterPro" id="IPR011322">
    <property type="entry name" value="N-reg_PII-like_a/b"/>
</dbReference>
<dbReference type="InterPro" id="IPR015867">
    <property type="entry name" value="N-reg_PII/ATP_PRibTrfase_C"/>
</dbReference>
<dbReference type="NCBIfam" id="TIGR00070">
    <property type="entry name" value="hisG"/>
    <property type="match status" value="1"/>
</dbReference>
<dbReference type="NCBIfam" id="TIGR03455">
    <property type="entry name" value="HisG_C-term"/>
    <property type="match status" value="1"/>
</dbReference>
<dbReference type="PANTHER" id="PTHR21403:SF10">
    <property type="entry name" value="ATP PHOSPHORIBOSYLTRANSFERASE"/>
    <property type="match status" value="1"/>
</dbReference>
<dbReference type="PANTHER" id="PTHR21403">
    <property type="entry name" value="ATP PHOSPHORIBOSYLTRANSFERASE ATP-PRTASE"/>
    <property type="match status" value="1"/>
</dbReference>
<dbReference type="Pfam" id="PF01634">
    <property type="entry name" value="HisG"/>
    <property type="match status" value="1"/>
</dbReference>
<dbReference type="Pfam" id="PF08029">
    <property type="entry name" value="HisG_C"/>
    <property type="match status" value="1"/>
</dbReference>
<dbReference type="SUPFAM" id="SSF54913">
    <property type="entry name" value="GlnB-like"/>
    <property type="match status" value="1"/>
</dbReference>
<dbReference type="SUPFAM" id="SSF53850">
    <property type="entry name" value="Periplasmic binding protein-like II"/>
    <property type="match status" value="1"/>
</dbReference>
<dbReference type="PROSITE" id="PS01316">
    <property type="entry name" value="ATP_P_PHORIBOSYLTR"/>
    <property type="match status" value="1"/>
</dbReference>
<name>HIS1_PYRCJ</name>
<keyword id="KW-0028">Amino-acid biosynthesis</keyword>
<keyword id="KW-0067">ATP-binding</keyword>
<keyword id="KW-0963">Cytoplasm</keyword>
<keyword id="KW-0328">Glycosyltransferase</keyword>
<keyword id="KW-0368">Histidine biosynthesis</keyword>
<keyword id="KW-0460">Magnesium</keyword>
<keyword id="KW-0479">Metal-binding</keyword>
<keyword id="KW-0547">Nucleotide-binding</keyword>
<keyword id="KW-0808">Transferase</keyword>
<organism>
    <name type="scientific">Pyrobaculum calidifontis (strain DSM 21063 / JCM 11548 / VA1)</name>
    <dbReference type="NCBI Taxonomy" id="410359"/>
    <lineage>
        <taxon>Archaea</taxon>
        <taxon>Thermoproteota</taxon>
        <taxon>Thermoprotei</taxon>
        <taxon>Thermoproteales</taxon>
        <taxon>Thermoproteaceae</taxon>
        <taxon>Pyrobaculum</taxon>
    </lineage>
</organism>
<proteinExistence type="inferred from homology"/>
<accession>A3MSF5</accession>